<accession>Q8P3C6</accession>
<organism>
    <name type="scientific">Xanthomonas campestris pv. campestris (strain ATCC 33913 / DSM 3586 / NCPPB 528 / LMG 568 / P 25)</name>
    <dbReference type="NCBI Taxonomy" id="190485"/>
    <lineage>
        <taxon>Bacteria</taxon>
        <taxon>Pseudomonadati</taxon>
        <taxon>Pseudomonadota</taxon>
        <taxon>Gammaproteobacteria</taxon>
        <taxon>Lysobacterales</taxon>
        <taxon>Lysobacteraceae</taxon>
        <taxon>Xanthomonas</taxon>
    </lineage>
</organism>
<comment type="function">
    <text evidence="1">Probably involved in the control of the structural glucose backbone of osmoregulated periplasmic glucans (OPGs).</text>
</comment>
<comment type="pathway">
    <text>Glycan metabolism; osmoregulated periplasmic glucan (OPG) biosynthesis.</text>
</comment>
<comment type="subcellular location">
    <subcellularLocation>
        <location evidence="1">Periplasm</location>
    </subcellularLocation>
</comment>
<comment type="PTM">
    <text>Predicted to be exported by the Tat system. The position of the signal peptide cleavage has not been experimentally proven.</text>
</comment>
<comment type="similarity">
    <text evidence="3">Belongs to the OpgD/OpgG family.</text>
</comment>
<dbReference type="EMBL" id="AE008922">
    <property type="protein sequence ID" value="AAM43366.1"/>
    <property type="molecule type" value="Genomic_DNA"/>
</dbReference>
<dbReference type="RefSeq" id="NP_639484.1">
    <property type="nucleotide sequence ID" value="NC_003902.1"/>
</dbReference>
<dbReference type="RefSeq" id="WP_011039214.1">
    <property type="nucleotide sequence ID" value="NC_003902.1"/>
</dbReference>
<dbReference type="PDB" id="8X18">
    <property type="method" value="X-ray"/>
    <property type="resolution" value="2.25 A"/>
    <property type="chains" value="A/B=1-533"/>
</dbReference>
<dbReference type="PDBsum" id="8X18"/>
<dbReference type="SMR" id="Q8P3C6"/>
<dbReference type="STRING" id="190485.XCC4145"/>
<dbReference type="EnsemblBacteria" id="AAM43366">
    <property type="protein sequence ID" value="AAM43366"/>
    <property type="gene ID" value="XCC4145"/>
</dbReference>
<dbReference type="KEGG" id="xcc:XCC4145"/>
<dbReference type="PATRIC" id="fig|190485.4.peg.4443"/>
<dbReference type="eggNOG" id="COG3131">
    <property type="taxonomic scope" value="Bacteria"/>
</dbReference>
<dbReference type="HOGENOM" id="CLU_023403_2_0_6"/>
<dbReference type="OrthoDB" id="335750at2"/>
<dbReference type="UniPathway" id="UPA00637"/>
<dbReference type="Proteomes" id="UP000001010">
    <property type="component" value="Chromosome"/>
</dbReference>
<dbReference type="GO" id="GO:0030288">
    <property type="term" value="C:outer membrane-bounded periplasmic space"/>
    <property type="evidence" value="ECO:0000318"/>
    <property type="project" value="GO_Central"/>
</dbReference>
<dbReference type="GO" id="GO:0030246">
    <property type="term" value="F:carbohydrate binding"/>
    <property type="evidence" value="ECO:0007669"/>
    <property type="project" value="InterPro"/>
</dbReference>
<dbReference type="GO" id="GO:0003824">
    <property type="term" value="F:catalytic activity"/>
    <property type="evidence" value="ECO:0007669"/>
    <property type="project" value="InterPro"/>
</dbReference>
<dbReference type="GO" id="GO:0051274">
    <property type="term" value="P:beta-glucan biosynthetic process"/>
    <property type="evidence" value="ECO:0000318"/>
    <property type="project" value="GO_Central"/>
</dbReference>
<dbReference type="FunFam" id="2.60.40.10:FF:002063">
    <property type="entry name" value="Glucans biosynthesis protein D"/>
    <property type="match status" value="1"/>
</dbReference>
<dbReference type="FunFam" id="2.70.98.10:FF:000001">
    <property type="entry name" value="Glucans biosynthesis protein G"/>
    <property type="match status" value="1"/>
</dbReference>
<dbReference type="Gene3D" id="2.70.98.10">
    <property type="match status" value="1"/>
</dbReference>
<dbReference type="Gene3D" id="2.60.40.10">
    <property type="entry name" value="Immunoglobulins"/>
    <property type="match status" value="1"/>
</dbReference>
<dbReference type="HAMAP" id="MF_01068">
    <property type="entry name" value="MdoD_OpgD"/>
    <property type="match status" value="1"/>
</dbReference>
<dbReference type="InterPro" id="IPR011013">
    <property type="entry name" value="Gal_mutarotase_sf_dom"/>
</dbReference>
<dbReference type="InterPro" id="IPR014718">
    <property type="entry name" value="GH-type_carb-bd"/>
</dbReference>
<dbReference type="InterPro" id="IPR023724">
    <property type="entry name" value="Glucan_biosyn_MdoD"/>
</dbReference>
<dbReference type="InterPro" id="IPR014438">
    <property type="entry name" value="Glucan_biosyn_MdoG/MdoD"/>
</dbReference>
<dbReference type="InterPro" id="IPR007444">
    <property type="entry name" value="Glucan_biosyn_MdoG_C"/>
</dbReference>
<dbReference type="InterPro" id="IPR013783">
    <property type="entry name" value="Ig-like_fold"/>
</dbReference>
<dbReference type="InterPro" id="IPR014756">
    <property type="entry name" value="Ig_E-set"/>
</dbReference>
<dbReference type="InterPro" id="IPR006311">
    <property type="entry name" value="TAT_signal"/>
</dbReference>
<dbReference type="PANTHER" id="PTHR30504">
    <property type="entry name" value="GLUCANS BIOSYNTHESIS PROTEIN"/>
    <property type="match status" value="1"/>
</dbReference>
<dbReference type="PANTHER" id="PTHR30504:SF3">
    <property type="entry name" value="GLUCANS BIOSYNTHESIS PROTEIN D"/>
    <property type="match status" value="1"/>
</dbReference>
<dbReference type="Pfam" id="PF04349">
    <property type="entry name" value="MdoG"/>
    <property type="match status" value="1"/>
</dbReference>
<dbReference type="PIRSF" id="PIRSF006281">
    <property type="entry name" value="MdoG"/>
    <property type="match status" value="1"/>
</dbReference>
<dbReference type="SUPFAM" id="SSF81296">
    <property type="entry name" value="E set domains"/>
    <property type="match status" value="1"/>
</dbReference>
<dbReference type="SUPFAM" id="SSF74650">
    <property type="entry name" value="Galactose mutarotase-like"/>
    <property type="match status" value="1"/>
</dbReference>
<dbReference type="PROSITE" id="PS51318">
    <property type="entry name" value="TAT"/>
    <property type="match status" value="1"/>
</dbReference>
<evidence type="ECO:0000250" key="1"/>
<evidence type="ECO:0000255" key="2"/>
<evidence type="ECO:0000305" key="3"/>
<sequence>MQRRHFLKNAAAALAALGLPALPPWALAAKAVGLRRLGQPQPFDYAWLKGQARALAKAPYKSHKQVLPGPLESLNWDQYQSIRYRQDHALWADGNGKFQAKFFHLGLYFHTPVHIYDIVDGKAQQLAYDPAAFDYGRSGLGGKQLPKDLGFAGFRLNTRKDTDRDFSAFLGASYFRAVGKEGQYGQSARGLAIDTGTGGPEEFPDFIAYYLEQPADDSDTVVVYGLLDSPSVSGAYRFAITNGEVLVMDIDSALYPRKAIERLGIGPCTSMYQTGENDRRMDWDWRPEIHDTDGLAMWTGGGEWIWRPLCNPPHLRFNMFVDENPRGFGLLQRDRNFDHYQDDGVFYEKRPCLWVEPKSGWGKGSVQLVEIPTVDETFDNIVAFWNPQAKPQPGQELLMGYRLYWGAHPPASSPLAHCVATRTGLGGIVGQKRSHFSWRFAVDFAGGELAALAKDPKAKVEAVLQVSRGTTEIVSARPLHELKGYRAMFDLVPPDEGTQQIDIRLFLRANGKPLTETWLYQWTPPPASERKIY</sequence>
<feature type="signal peptide" description="Tat-type signal" evidence="2">
    <location>
        <begin position="1"/>
        <end position="28"/>
    </location>
</feature>
<feature type="chain" id="PRO_0000020217" description="Glucans biosynthesis protein D">
    <location>
        <begin position="29"/>
        <end position="533"/>
    </location>
</feature>
<reference key="1">
    <citation type="journal article" date="2002" name="Nature">
        <title>Comparison of the genomes of two Xanthomonas pathogens with differing host specificities.</title>
        <authorList>
            <person name="da Silva A.C.R."/>
            <person name="Ferro J.A."/>
            <person name="Reinach F.C."/>
            <person name="Farah C.S."/>
            <person name="Furlan L.R."/>
            <person name="Quaggio R.B."/>
            <person name="Monteiro-Vitorello C.B."/>
            <person name="Van Sluys M.A."/>
            <person name="Almeida N.F. Jr."/>
            <person name="Alves L.M.C."/>
            <person name="do Amaral A.M."/>
            <person name="Bertolini M.C."/>
            <person name="Camargo L.E.A."/>
            <person name="Camarotte G."/>
            <person name="Cannavan F."/>
            <person name="Cardozo J."/>
            <person name="Chambergo F."/>
            <person name="Ciapina L.P."/>
            <person name="Cicarelli R.M.B."/>
            <person name="Coutinho L.L."/>
            <person name="Cursino-Santos J.R."/>
            <person name="El-Dorry H."/>
            <person name="Faria J.B."/>
            <person name="Ferreira A.J.S."/>
            <person name="Ferreira R.C.C."/>
            <person name="Ferro M.I.T."/>
            <person name="Formighieri E.F."/>
            <person name="Franco M.C."/>
            <person name="Greggio C.C."/>
            <person name="Gruber A."/>
            <person name="Katsuyama A.M."/>
            <person name="Kishi L.T."/>
            <person name="Leite R.P."/>
            <person name="Lemos E.G.M."/>
            <person name="Lemos M.V.F."/>
            <person name="Locali E.C."/>
            <person name="Machado M.A."/>
            <person name="Madeira A.M.B.N."/>
            <person name="Martinez-Rossi N.M."/>
            <person name="Martins E.C."/>
            <person name="Meidanis J."/>
            <person name="Menck C.F.M."/>
            <person name="Miyaki C.Y."/>
            <person name="Moon D.H."/>
            <person name="Moreira L.M."/>
            <person name="Novo M.T.M."/>
            <person name="Okura V.K."/>
            <person name="Oliveira M.C."/>
            <person name="Oliveira V.R."/>
            <person name="Pereira H.A."/>
            <person name="Rossi A."/>
            <person name="Sena J.A.D."/>
            <person name="Silva C."/>
            <person name="de Souza R.F."/>
            <person name="Spinola L.A.F."/>
            <person name="Takita M.A."/>
            <person name="Tamura R.E."/>
            <person name="Teixeira E.C."/>
            <person name="Tezza R.I.D."/>
            <person name="Trindade dos Santos M."/>
            <person name="Truffi D."/>
            <person name="Tsai S.M."/>
            <person name="White F.F."/>
            <person name="Setubal J.C."/>
            <person name="Kitajima J.P."/>
        </authorList>
    </citation>
    <scope>NUCLEOTIDE SEQUENCE [LARGE SCALE GENOMIC DNA]</scope>
    <source>
        <strain>ATCC 33913 / DSM 3586 / NCPPB 528 / LMG 568 / P 25</strain>
    </source>
</reference>
<gene>
    <name type="primary">opgD</name>
    <name type="ordered locus">XCC4145</name>
</gene>
<keyword id="KW-0002">3D-structure</keyword>
<keyword id="KW-0574">Periplasm</keyword>
<keyword id="KW-1185">Reference proteome</keyword>
<keyword id="KW-0732">Signal</keyword>
<protein>
    <recommendedName>
        <fullName>Glucans biosynthesis protein D</fullName>
    </recommendedName>
</protein>
<proteinExistence type="evidence at protein level"/>
<name>OPGD_XANCP</name>